<protein>
    <recommendedName>
        <fullName>V-type proton ATPase subunit G 3</fullName>
        <shortName>V-ATPase subunit G 3</shortName>
    </recommendedName>
    <alternativeName>
        <fullName>V-ATPase 13 kDa subunit 3</fullName>
    </alternativeName>
    <alternativeName>
        <fullName>Vacuolar proton pump subunit G 3</fullName>
    </alternativeName>
</protein>
<sequence length="118" mass="13917">MTSQSQGIHQLLQAEKRAKDKLEEAKKRKGKRLKQAKEEAMVEIDQYRMQRDKEFRLKQSKIMGSQNNLSDEIEEQTLGKIQELNGHYNKYMESVMNQLLSMVCDMKPEIHVNYRATN</sequence>
<evidence type="ECO:0000250" key="1">
    <source>
        <dbReference type="UniProtKB" id="O75348"/>
    </source>
</evidence>
<evidence type="ECO:0000255" key="2"/>
<evidence type="ECO:0000256" key="3">
    <source>
        <dbReference type="SAM" id="MobiDB-lite"/>
    </source>
</evidence>
<evidence type="ECO:0000269" key="4">
    <source>
    </source>
</evidence>
<evidence type="ECO:0000303" key="5">
    <source>
    </source>
</evidence>
<evidence type="ECO:0000305" key="6"/>
<proteinExistence type="evidence at protein level"/>
<accession>Q96LB4</accession>
<accession>Q495K2</accession>
<accession>Q495K4</accession>
<accession>Q5T9L6</accession>
<gene>
    <name type="primary">ATP6V1G3</name>
    <name type="synonym">ATP6G3</name>
</gene>
<name>VATG3_HUMAN</name>
<reference key="1">
    <citation type="journal article" date="2002" name="Gene">
        <title>Molecular cloning and characterization of novel tissue-specific isoforms of the human vacuolar H(+)-ATPase C, G and d subunits, and their evaluation in autosomal recessive distal renal tubular acidosis.</title>
        <authorList>
            <person name="Smith A.N."/>
            <person name="Borthwick K.J."/>
            <person name="Karet F.E."/>
        </authorList>
    </citation>
    <scope>NUCLEOTIDE SEQUENCE [MRNA] (ISOFORM 1)</scope>
    <scope>ALTERNATIVE SPLICING</scope>
    <scope>TISSUE SPECIFICITY</scope>
</reference>
<reference key="2">
    <citation type="journal article" date="2006" name="Nature">
        <title>The DNA sequence and biological annotation of human chromosome 1.</title>
        <authorList>
            <person name="Gregory S.G."/>
            <person name="Barlow K.F."/>
            <person name="McLay K.E."/>
            <person name="Kaul R."/>
            <person name="Swarbreck D."/>
            <person name="Dunham A."/>
            <person name="Scott C.E."/>
            <person name="Howe K.L."/>
            <person name="Woodfine K."/>
            <person name="Spencer C.C.A."/>
            <person name="Jones M.C."/>
            <person name="Gillson C."/>
            <person name="Searle S."/>
            <person name="Zhou Y."/>
            <person name="Kokocinski F."/>
            <person name="McDonald L."/>
            <person name="Evans R."/>
            <person name="Phillips K."/>
            <person name="Atkinson A."/>
            <person name="Cooper R."/>
            <person name="Jones C."/>
            <person name="Hall R.E."/>
            <person name="Andrews T.D."/>
            <person name="Lloyd C."/>
            <person name="Ainscough R."/>
            <person name="Almeida J.P."/>
            <person name="Ambrose K.D."/>
            <person name="Anderson F."/>
            <person name="Andrew R.W."/>
            <person name="Ashwell R.I.S."/>
            <person name="Aubin K."/>
            <person name="Babbage A.K."/>
            <person name="Bagguley C.L."/>
            <person name="Bailey J."/>
            <person name="Beasley H."/>
            <person name="Bethel G."/>
            <person name="Bird C.P."/>
            <person name="Bray-Allen S."/>
            <person name="Brown J.Y."/>
            <person name="Brown A.J."/>
            <person name="Buckley D."/>
            <person name="Burton J."/>
            <person name="Bye J."/>
            <person name="Carder C."/>
            <person name="Chapman J.C."/>
            <person name="Clark S.Y."/>
            <person name="Clarke G."/>
            <person name="Clee C."/>
            <person name="Cobley V."/>
            <person name="Collier R.E."/>
            <person name="Corby N."/>
            <person name="Coville G.J."/>
            <person name="Davies J."/>
            <person name="Deadman R."/>
            <person name="Dunn M."/>
            <person name="Earthrowl M."/>
            <person name="Ellington A.G."/>
            <person name="Errington H."/>
            <person name="Frankish A."/>
            <person name="Frankland J."/>
            <person name="French L."/>
            <person name="Garner P."/>
            <person name="Garnett J."/>
            <person name="Gay L."/>
            <person name="Ghori M.R.J."/>
            <person name="Gibson R."/>
            <person name="Gilby L.M."/>
            <person name="Gillett W."/>
            <person name="Glithero R.J."/>
            <person name="Grafham D.V."/>
            <person name="Griffiths C."/>
            <person name="Griffiths-Jones S."/>
            <person name="Grocock R."/>
            <person name="Hammond S."/>
            <person name="Harrison E.S.I."/>
            <person name="Hart E."/>
            <person name="Haugen E."/>
            <person name="Heath P.D."/>
            <person name="Holmes S."/>
            <person name="Holt K."/>
            <person name="Howden P.J."/>
            <person name="Hunt A.R."/>
            <person name="Hunt S.E."/>
            <person name="Hunter G."/>
            <person name="Isherwood J."/>
            <person name="James R."/>
            <person name="Johnson C."/>
            <person name="Johnson D."/>
            <person name="Joy A."/>
            <person name="Kay M."/>
            <person name="Kershaw J.K."/>
            <person name="Kibukawa M."/>
            <person name="Kimberley A.M."/>
            <person name="King A."/>
            <person name="Knights A.J."/>
            <person name="Lad H."/>
            <person name="Laird G."/>
            <person name="Lawlor S."/>
            <person name="Leongamornlert D.A."/>
            <person name="Lloyd D.M."/>
            <person name="Loveland J."/>
            <person name="Lovell J."/>
            <person name="Lush M.J."/>
            <person name="Lyne R."/>
            <person name="Martin S."/>
            <person name="Mashreghi-Mohammadi M."/>
            <person name="Matthews L."/>
            <person name="Matthews N.S.W."/>
            <person name="McLaren S."/>
            <person name="Milne S."/>
            <person name="Mistry S."/>
            <person name="Moore M.J.F."/>
            <person name="Nickerson T."/>
            <person name="O'Dell C.N."/>
            <person name="Oliver K."/>
            <person name="Palmeiri A."/>
            <person name="Palmer S.A."/>
            <person name="Parker A."/>
            <person name="Patel D."/>
            <person name="Pearce A.V."/>
            <person name="Peck A.I."/>
            <person name="Pelan S."/>
            <person name="Phelps K."/>
            <person name="Phillimore B.J."/>
            <person name="Plumb R."/>
            <person name="Rajan J."/>
            <person name="Raymond C."/>
            <person name="Rouse G."/>
            <person name="Saenphimmachak C."/>
            <person name="Sehra H.K."/>
            <person name="Sheridan E."/>
            <person name="Shownkeen R."/>
            <person name="Sims S."/>
            <person name="Skuce C.D."/>
            <person name="Smith M."/>
            <person name="Steward C."/>
            <person name="Subramanian S."/>
            <person name="Sycamore N."/>
            <person name="Tracey A."/>
            <person name="Tromans A."/>
            <person name="Van Helmond Z."/>
            <person name="Wall M."/>
            <person name="Wallis J.M."/>
            <person name="White S."/>
            <person name="Whitehead S.L."/>
            <person name="Wilkinson J.E."/>
            <person name="Willey D.L."/>
            <person name="Williams H."/>
            <person name="Wilming L."/>
            <person name="Wray P.W."/>
            <person name="Wu Z."/>
            <person name="Coulson A."/>
            <person name="Vaudin M."/>
            <person name="Sulston J.E."/>
            <person name="Durbin R.M."/>
            <person name="Hubbard T."/>
            <person name="Wooster R."/>
            <person name="Dunham I."/>
            <person name="Carter N.P."/>
            <person name="McVean G."/>
            <person name="Ross M.T."/>
            <person name="Harrow J."/>
            <person name="Olson M.V."/>
            <person name="Beck S."/>
            <person name="Rogers J."/>
            <person name="Bentley D.R."/>
        </authorList>
    </citation>
    <scope>NUCLEOTIDE SEQUENCE [LARGE SCALE GENOMIC DNA]</scope>
</reference>
<reference key="3">
    <citation type="journal article" date="2004" name="Genome Res.">
        <title>The status, quality, and expansion of the NIH full-length cDNA project: the Mammalian Gene Collection (MGC).</title>
        <authorList>
            <consortium name="The MGC Project Team"/>
        </authorList>
    </citation>
    <scope>NUCLEOTIDE SEQUENCE [LARGE SCALE MRNA] (ISOFORMS 1; 3 AND 4)</scope>
</reference>
<dbReference type="EMBL" id="AY039760">
    <property type="protein sequence ID" value="AAK83465.1"/>
    <property type="molecule type" value="mRNA"/>
</dbReference>
<dbReference type="EMBL" id="AL157402">
    <property type="status" value="NOT_ANNOTATED_CDS"/>
    <property type="molecule type" value="Genomic_DNA"/>
</dbReference>
<dbReference type="EMBL" id="BC101129">
    <property type="protein sequence ID" value="AAI01130.1"/>
    <property type="molecule type" value="mRNA"/>
</dbReference>
<dbReference type="EMBL" id="BC101130">
    <property type="protein sequence ID" value="AAI01131.1"/>
    <property type="molecule type" value="mRNA"/>
</dbReference>
<dbReference type="EMBL" id="BC101131">
    <property type="protein sequence ID" value="AAI01132.2"/>
    <property type="molecule type" value="mRNA"/>
</dbReference>
<dbReference type="CCDS" id="CCDS1395.1">
    <molecule id="Q96LB4-1"/>
</dbReference>
<dbReference type="CCDS" id="CCDS1396.1">
    <molecule id="Q96LB4-3"/>
</dbReference>
<dbReference type="CCDS" id="CCDS81414.1">
    <molecule id="Q96LB4-4"/>
</dbReference>
<dbReference type="RefSeq" id="NP_001307147.1">
    <molecule id="Q96LB4-4"/>
    <property type="nucleotide sequence ID" value="NM_001320218.2"/>
</dbReference>
<dbReference type="RefSeq" id="NP_001363790.1">
    <molecule id="Q96LB4-1"/>
    <property type="nucleotide sequence ID" value="NM_001376861.1"/>
</dbReference>
<dbReference type="RefSeq" id="NP_001363791.1">
    <molecule id="Q96LB4-4"/>
    <property type="nucleotide sequence ID" value="NM_001376862.1"/>
</dbReference>
<dbReference type="RefSeq" id="NP_001363792.1">
    <molecule id="Q96LB4-3"/>
    <property type="nucleotide sequence ID" value="NM_001376863.1"/>
</dbReference>
<dbReference type="RefSeq" id="NP_573569.1">
    <molecule id="Q96LB4-1"/>
    <property type="nucleotide sequence ID" value="NM_133262.3"/>
</dbReference>
<dbReference type="RefSeq" id="NP_579872.1">
    <molecule id="Q96LB4-3"/>
    <property type="nucleotide sequence ID" value="NM_133326.2"/>
</dbReference>
<dbReference type="RefSeq" id="XP_006711226.1">
    <property type="nucleotide sequence ID" value="XM_006711163.3"/>
</dbReference>
<dbReference type="RefSeq" id="XP_011507488.1">
    <property type="nucleotide sequence ID" value="XM_011509186.2"/>
</dbReference>
<dbReference type="RefSeq" id="XP_011507489.1">
    <property type="nucleotide sequence ID" value="XM_011509187.2"/>
</dbReference>
<dbReference type="SMR" id="Q96LB4"/>
<dbReference type="BioGRID" id="126042">
    <property type="interactions" value="6"/>
</dbReference>
<dbReference type="ComplexPortal" id="CPX-2470">
    <property type="entry name" value="Vacuolar proton translocating ATPase complex, ATP6V0A1 variant"/>
</dbReference>
<dbReference type="ComplexPortal" id="CPX-6904">
    <property type="entry name" value="Vacuolar proton translocating ATPase complex, ATP6V0A2 variant"/>
</dbReference>
<dbReference type="ComplexPortal" id="CPX-6905">
    <property type="entry name" value="Vacuolar proton translocating ATPase complex, ATP6V0A3 variant"/>
</dbReference>
<dbReference type="ComplexPortal" id="CPX-6912">
    <property type="entry name" value="Vacuolar proton translocating ATPase complex, ATP6V0A4 variant"/>
</dbReference>
<dbReference type="FunCoup" id="Q96LB4">
    <property type="interactions" value="955"/>
</dbReference>
<dbReference type="IntAct" id="Q96LB4">
    <property type="interactions" value="2"/>
</dbReference>
<dbReference type="STRING" id="9606.ENSP00000417171"/>
<dbReference type="DrugBank" id="DB01133">
    <property type="generic name" value="Tiludronic acid"/>
</dbReference>
<dbReference type="TCDB" id="3.A.2.2.4">
    <property type="family name" value="the h+- or na+-translocating f-type, v-type and a-type atpase (f-atpase) superfamily"/>
</dbReference>
<dbReference type="GlyGen" id="Q96LB4">
    <property type="glycosylation" value="1 site, 1 O-linked glycan (1 site)"/>
</dbReference>
<dbReference type="iPTMnet" id="Q96LB4"/>
<dbReference type="PhosphoSitePlus" id="Q96LB4"/>
<dbReference type="BioMuta" id="ATP6V1G3"/>
<dbReference type="DMDM" id="20140697"/>
<dbReference type="MassIVE" id="Q96LB4"/>
<dbReference type="PaxDb" id="9606-ENSP00000281087"/>
<dbReference type="PeptideAtlas" id="Q96LB4"/>
<dbReference type="ProteomicsDB" id="77189">
    <molecule id="Q96LB4-1"/>
</dbReference>
<dbReference type="ProteomicsDB" id="77190">
    <molecule id="Q96LB4-3"/>
</dbReference>
<dbReference type="ProteomicsDB" id="77191">
    <molecule id="Q96LB4-4"/>
</dbReference>
<dbReference type="Antibodypedia" id="34484">
    <property type="antibodies" value="105 antibodies from 26 providers"/>
</dbReference>
<dbReference type="DNASU" id="127124"/>
<dbReference type="Ensembl" id="ENST00000281087.6">
    <molecule id="Q96LB4-1"/>
    <property type="protein sequence ID" value="ENSP00000281087.2"/>
    <property type="gene ID" value="ENSG00000151418.12"/>
</dbReference>
<dbReference type="Ensembl" id="ENST00000309309.11">
    <molecule id="Q96LB4-3"/>
    <property type="protein sequence ID" value="ENSP00000309574.7"/>
    <property type="gene ID" value="ENSG00000151418.12"/>
</dbReference>
<dbReference type="Ensembl" id="ENST00000367381.2">
    <molecule id="Q96LB4-1"/>
    <property type="protein sequence ID" value="ENSP00000356351.2"/>
    <property type="gene ID" value="ENSG00000263014.5"/>
</dbReference>
<dbReference type="Ensembl" id="ENST00000367382.6">
    <molecule id="Q96LB4-1"/>
    <property type="protein sequence ID" value="ENSP00000356352.2"/>
    <property type="gene ID" value="ENSG00000151418.12"/>
</dbReference>
<dbReference type="Ensembl" id="ENST00000489986.1">
    <molecule id="Q96LB4-4"/>
    <property type="protein sequence ID" value="ENSP00000417171.1"/>
    <property type="gene ID" value="ENSG00000151418.12"/>
</dbReference>
<dbReference type="Ensembl" id="ENST00000571439.5">
    <molecule id="Q96LB4-3"/>
    <property type="protein sequence ID" value="ENSP00000461616.1"/>
    <property type="gene ID" value="ENSG00000263014.5"/>
</dbReference>
<dbReference type="Ensembl" id="ENST00000573121.5">
    <molecule id="Q96LB4-1"/>
    <property type="protein sequence ID" value="ENSP00000461329.1"/>
    <property type="gene ID" value="ENSG00000263014.5"/>
</dbReference>
<dbReference type="Ensembl" id="ENST00000575971.5">
    <molecule id="Q96LB4-4"/>
    <property type="protein sequence ID" value="ENSP00000461228.1"/>
    <property type="gene ID" value="ENSG00000263014.5"/>
</dbReference>
<dbReference type="GeneID" id="127124"/>
<dbReference type="KEGG" id="hsa:127124"/>
<dbReference type="MANE-Select" id="ENST00000367382.6">
    <property type="protein sequence ID" value="ENSP00000356352.2"/>
    <property type="RefSeq nucleotide sequence ID" value="NM_001376861.1"/>
    <property type="RefSeq protein sequence ID" value="NP_001363790.1"/>
</dbReference>
<dbReference type="UCSC" id="uc001guo.3">
    <molecule id="Q96LB4-1"/>
    <property type="organism name" value="human"/>
</dbReference>
<dbReference type="AGR" id="HGNC:18265"/>
<dbReference type="CTD" id="127124"/>
<dbReference type="DisGeNET" id="127124"/>
<dbReference type="GeneCards" id="ATP6V1G3"/>
<dbReference type="HGNC" id="HGNC:18265">
    <property type="gene designation" value="ATP6V1G3"/>
</dbReference>
<dbReference type="HPA" id="ENSG00000151418">
    <property type="expression patterns" value="Tissue enriched (kidney)"/>
</dbReference>
<dbReference type="MIM" id="618071">
    <property type="type" value="gene"/>
</dbReference>
<dbReference type="neXtProt" id="NX_Q96LB4"/>
<dbReference type="OpenTargets" id="ENSG00000151418"/>
<dbReference type="PharmGKB" id="PA38515"/>
<dbReference type="VEuPathDB" id="HostDB:ENSG00000151418"/>
<dbReference type="eggNOG" id="KOG1772">
    <property type="taxonomic scope" value="Eukaryota"/>
</dbReference>
<dbReference type="GeneTree" id="ENSGT00940000160882"/>
<dbReference type="HOGENOM" id="CLU_125101_1_1_1"/>
<dbReference type="InParanoid" id="Q96LB4"/>
<dbReference type="OMA" id="SYHRNME"/>
<dbReference type="OrthoDB" id="250802at2759"/>
<dbReference type="PAN-GO" id="Q96LB4">
    <property type="GO annotations" value="1 GO annotation based on evolutionary models"/>
</dbReference>
<dbReference type="PhylomeDB" id="Q96LB4"/>
<dbReference type="TreeFam" id="TF313777"/>
<dbReference type="BioCyc" id="MetaCyc:HS07734-MONOMER"/>
<dbReference type="PathwayCommons" id="Q96LB4"/>
<dbReference type="Reactome" id="R-HSA-1222556">
    <property type="pathway name" value="ROS and RNS production in phagocytes"/>
</dbReference>
<dbReference type="Reactome" id="R-HSA-77387">
    <property type="pathway name" value="Insulin receptor recycling"/>
</dbReference>
<dbReference type="Reactome" id="R-HSA-917977">
    <property type="pathway name" value="Transferrin endocytosis and recycling"/>
</dbReference>
<dbReference type="Reactome" id="R-HSA-9639288">
    <property type="pathway name" value="Amino acids regulate mTORC1"/>
</dbReference>
<dbReference type="Reactome" id="R-HSA-983712">
    <property type="pathway name" value="Ion channel transport"/>
</dbReference>
<dbReference type="SignaLink" id="Q96LB4"/>
<dbReference type="BioGRID-ORCS" id="127124">
    <property type="hits" value="15 hits in 1148 CRISPR screens"/>
</dbReference>
<dbReference type="CD-CODE" id="91857CE7">
    <property type="entry name" value="Nucleolus"/>
</dbReference>
<dbReference type="GeneWiki" id="ATP6V1G3"/>
<dbReference type="GenomeRNAi" id="127124"/>
<dbReference type="Pharos" id="Q96LB4">
    <property type="development level" value="Tbio"/>
</dbReference>
<dbReference type="PRO" id="PR:Q96LB4"/>
<dbReference type="Proteomes" id="UP000005640">
    <property type="component" value="Chromosome 1"/>
</dbReference>
<dbReference type="RNAct" id="Q96LB4">
    <property type="molecule type" value="protein"/>
</dbReference>
<dbReference type="Bgee" id="ENSG00000151418">
    <property type="expression patterns" value="Expressed in male germ line stem cell (sensu Vertebrata) in testis and 28 other cell types or tissues"/>
</dbReference>
<dbReference type="GO" id="GO:0005829">
    <property type="term" value="C:cytosol"/>
    <property type="evidence" value="ECO:0000314"/>
    <property type="project" value="UniProtKB"/>
</dbReference>
<dbReference type="GO" id="GO:0005886">
    <property type="term" value="C:plasma membrane"/>
    <property type="evidence" value="ECO:0000314"/>
    <property type="project" value="UniProtKB"/>
</dbReference>
<dbReference type="GO" id="GO:0030672">
    <property type="term" value="C:synaptic vesicle membrane"/>
    <property type="evidence" value="ECO:0000318"/>
    <property type="project" value="GO_Central"/>
</dbReference>
<dbReference type="GO" id="GO:0000221">
    <property type="term" value="C:vacuolar proton-transporting V-type ATPase, V1 domain"/>
    <property type="evidence" value="ECO:0000318"/>
    <property type="project" value="GO_Central"/>
</dbReference>
<dbReference type="GO" id="GO:0016887">
    <property type="term" value="F:ATP hydrolysis activity"/>
    <property type="evidence" value="ECO:0000318"/>
    <property type="project" value="GO_Central"/>
</dbReference>
<dbReference type="GO" id="GO:0051117">
    <property type="term" value="F:ATPase binding"/>
    <property type="evidence" value="ECO:0000353"/>
    <property type="project" value="UniProtKB"/>
</dbReference>
<dbReference type="GO" id="GO:0046961">
    <property type="term" value="F:proton-transporting ATPase activity, rotational mechanism"/>
    <property type="evidence" value="ECO:0000318"/>
    <property type="project" value="GO_Central"/>
</dbReference>
<dbReference type="GO" id="GO:0097401">
    <property type="term" value="P:synaptic vesicle lumen acidification"/>
    <property type="evidence" value="ECO:0000318"/>
    <property type="project" value="GO_Central"/>
</dbReference>
<dbReference type="FunFam" id="1.20.5.2950:FF:000001">
    <property type="entry name" value="V-type proton ATPase subunit G"/>
    <property type="match status" value="1"/>
</dbReference>
<dbReference type="FunFam" id="1.20.5.620:FF:000004">
    <property type="entry name" value="V-type proton ATPase subunit G"/>
    <property type="match status" value="1"/>
</dbReference>
<dbReference type="Gene3D" id="1.20.5.2950">
    <property type="match status" value="1"/>
</dbReference>
<dbReference type="InterPro" id="IPR005124">
    <property type="entry name" value="V-ATPase_G"/>
</dbReference>
<dbReference type="NCBIfam" id="TIGR01147">
    <property type="entry name" value="V_ATP_synt_G"/>
    <property type="match status" value="1"/>
</dbReference>
<dbReference type="PANTHER" id="PTHR12713:SF5">
    <property type="entry name" value="V-TYPE PROTON ATPASE SUBUNIT G 3"/>
    <property type="match status" value="1"/>
</dbReference>
<dbReference type="PANTHER" id="PTHR12713">
    <property type="entry name" value="VACUOLAR ATP SYNTHASE SUBUNIT G"/>
    <property type="match status" value="1"/>
</dbReference>
<dbReference type="Pfam" id="PF03179">
    <property type="entry name" value="V-ATPase_G"/>
    <property type="match status" value="1"/>
</dbReference>
<keyword id="KW-0025">Alternative splicing</keyword>
<keyword id="KW-0175">Coiled coil</keyword>
<keyword id="KW-0375">Hydrogen ion transport</keyword>
<keyword id="KW-0406">Ion transport</keyword>
<keyword id="KW-1267">Proteomics identification</keyword>
<keyword id="KW-1185">Reference proteome</keyword>
<keyword id="KW-0813">Transport</keyword>
<organism>
    <name type="scientific">Homo sapiens</name>
    <name type="common">Human</name>
    <dbReference type="NCBI Taxonomy" id="9606"/>
    <lineage>
        <taxon>Eukaryota</taxon>
        <taxon>Metazoa</taxon>
        <taxon>Chordata</taxon>
        <taxon>Craniata</taxon>
        <taxon>Vertebrata</taxon>
        <taxon>Euteleostomi</taxon>
        <taxon>Mammalia</taxon>
        <taxon>Eutheria</taxon>
        <taxon>Euarchontoglires</taxon>
        <taxon>Primates</taxon>
        <taxon>Haplorrhini</taxon>
        <taxon>Catarrhini</taxon>
        <taxon>Hominidae</taxon>
        <taxon>Homo</taxon>
    </lineage>
</organism>
<feature type="chain" id="PRO_0000192904" description="V-type proton ATPase subunit G 3">
    <location>
        <begin position="1"/>
        <end position="118"/>
    </location>
</feature>
<feature type="region of interest" description="Disordered" evidence="3">
    <location>
        <begin position="1"/>
        <end position="34"/>
    </location>
</feature>
<feature type="coiled-coil region" evidence="2">
    <location>
        <begin position="5"/>
        <end position="54"/>
    </location>
</feature>
<feature type="compositionally biased region" description="Basic and acidic residues" evidence="3">
    <location>
        <begin position="14"/>
        <end position="26"/>
    </location>
</feature>
<feature type="splice variant" id="VSP_036423" description="In isoform 3." evidence="5">
    <original>RKGKRLKQAKEEAMVEIDQYRMQRDKEFRLKQSKIMGSQNNLSDEIEEQTLGKIQELNGHYNKYMESVMNQLLSMVCDMKPEIHVNYRATN</original>
    <variation>ILHLLFLKRRDWDCFWKRKAIEASQGGSNGRN</variation>
    <location>
        <begin position="28"/>
        <end position="118"/>
    </location>
</feature>
<feature type="splice variant" id="VSP_036426" description="In isoform 4." evidence="5">
    <original>R</original>
    <variation>KTGTASG</variation>
    <location>
        <position position="28"/>
    </location>
</feature>
<feature type="sequence variant" id="VAR_048343" description="In dbSNP:rs16843254.">
    <original>E</original>
    <variation>Q</variation>
    <location>
        <position position="54"/>
    </location>
</feature>
<comment type="function">
    <text evidence="1">Subunit of the V1 complex of vacuolar(H+)-ATPase (V-ATPase), a multisubunit enzyme composed of a peripheral complex (V1) that hydrolyzes ATP and a membrane integral complex (V0) that translocates protons. V-ATPase is responsible for acidifying and maintaining the pH of intracellular compartments and in some cell types, is targeted to the plasma membrane, where it is responsible for acidifying the extracellular environment.</text>
</comment>
<comment type="subunit">
    <text evidence="1">V-ATPase is a heteromultimeric enzyme made up of two complexes: the ATP-hydrolytic V1 complex and the proton translocation V0 complex. The V1 complex consists of three catalytic AB heterodimers that form a heterohexamer, three peripheral stalks each consisting of EG heterodimers, one central rotor including subunits D and F, and the regulatory subunits C and H. The proton translocation complex V0 consists of the proton transport subunit a, a ring of proteolipid subunits c9c'', rotary subunit d, subunits e and f, and the accessory subunits ATP6AP1/Ac45 and ATP6AP2/PRR.</text>
</comment>
<comment type="interaction">
    <interactant intactId="EBI-12941272">
        <id>Q96LB4-4</id>
    </interactant>
    <interactant intactId="EBI-9087860">
        <id>P32243-2</id>
        <label>OTX2</label>
    </interactant>
    <organismsDiffer>false</organismsDiffer>
    <experiments>3</experiments>
</comment>
<comment type="alternative products">
    <event type="alternative splicing"/>
    <isoform>
        <id>Q96LB4-1</id>
        <name>1</name>
        <sequence type="displayed"/>
    </isoform>
    <isoform>
        <id>Q96LB4-2</id>
        <name>2</name>
        <sequence type="not described"/>
    </isoform>
    <isoform>
        <id>Q96LB4-3</id>
        <name>3</name>
        <sequence type="described" ref="VSP_036423"/>
    </isoform>
    <isoform>
        <id>Q96LB4-4</id>
        <name>4</name>
        <sequence type="described" ref="VSP_036426"/>
    </isoform>
</comment>
<comment type="tissue specificity">
    <text evidence="4">Kidney.</text>
</comment>
<comment type="similarity">
    <text evidence="6">Belongs to the V-ATPase G subunit family.</text>
</comment>